<organism>
    <name type="scientific">Listeria innocua serovar 6a (strain ATCC BAA-680 / CLIP 11262)</name>
    <dbReference type="NCBI Taxonomy" id="272626"/>
    <lineage>
        <taxon>Bacteria</taxon>
        <taxon>Bacillati</taxon>
        <taxon>Bacillota</taxon>
        <taxon>Bacilli</taxon>
        <taxon>Bacillales</taxon>
        <taxon>Listeriaceae</taxon>
        <taxon>Listeria</taxon>
    </lineage>
</organism>
<evidence type="ECO:0000255" key="1">
    <source>
        <dbReference type="HAMAP-Rule" id="MF_00444"/>
    </source>
</evidence>
<reference key="1">
    <citation type="journal article" date="2001" name="Science">
        <title>Comparative genomics of Listeria species.</title>
        <authorList>
            <person name="Glaser P."/>
            <person name="Frangeul L."/>
            <person name="Buchrieser C."/>
            <person name="Rusniok C."/>
            <person name="Amend A."/>
            <person name="Baquero F."/>
            <person name="Berche P."/>
            <person name="Bloecker H."/>
            <person name="Brandt P."/>
            <person name="Chakraborty T."/>
            <person name="Charbit A."/>
            <person name="Chetouani F."/>
            <person name="Couve E."/>
            <person name="de Daruvar A."/>
            <person name="Dehoux P."/>
            <person name="Domann E."/>
            <person name="Dominguez-Bernal G."/>
            <person name="Duchaud E."/>
            <person name="Durant L."/>
            <person name="Dussurget O."/>
            <person name="Entian K.-D."/>
            <person name="Fsihi H."/>
            <person name="Garcia-del Portillo F."/>
            <person name="Garrido P."/>
            <person name="Gautier L."/>
            <person name="Goebel W."/>
            <person name="Gomez-Lopez N."/>
            <person name="Hain T."/>
            <person name="Hauf J."/>
            <person name="Jackson D."/>
            <person name="Jones L.-M."/>
            <person name="Kaerst U."/>
            <person name="Kreft J."/>
            <person name="Kuhn M."/>
            <person name="Kunst F."/>
            <person name="Kurapkat G."/>
            <person name="Madueno E."/>
            <person name="Maitournam A."/>
            <person name="Mata Vicente J."/>
            <person name="Ng E."/>
            <person name="Nedjari H."/>
            <person name="Nordsiek G."/>
            <person name="Novella S."/>
            <person name="de Pablos B."/>
            <person name="Perez-Diaz J.-C."/>
            <person name="Purcell R."/>
            <person name="Remmel B."/>
            <person name="Rose M."/>
            <person name="Schlueter T."/>
            <person name="Simoes N."/>
            <person name="Tierrez A."/>
            <person name="Vazquez-Boland J.-A."/>
            <person name="Voss H."/>
            <person name="Wehland J."/>
            <person name="Cossart P."/>
        </authorList>
    </citation>
    <scope>NUCLEOTIDE SEQUENCE [LARGE SCALE GENOMIC DNA]</scope>
    <source>
        <strain>ATCC BAA-680 / CLIP 11262</strain>
    </source>
</reference>
<sequence length="198" mass="21605">MNLIPTVIEQTSRGERAYDIYSRLLKDRIIMLGSAIDDNVANSIVSQLLFLDAQDPEKDIFLYINSPGGSISAGMAIYDTMNFVKADVQTIGMGMAASMGSFLLTAGANGKRFALPNAEIMIHQPLGGAQGQATEIEIAARHILKIKERMNTIMAEKTGQPYEVIARDTDRDNFMTAQEAKDYGLIDDIIVNKSGLKG</sequence>
<protein>
    <recommendedName>
        <fullName evidence="1">ATP-dependent Clp protease proteolytic subunit</fullName>
        <ecNumber evidence="1">3.4.21.92</ecNumber>
    </recommendedName>
    <alternativeName>
        <fullName evidence="1">Endopeptidase Clp</fullName>
    </alternativeName>
</protein>
<keyword id="KW-0963">Cytoplasm</keyword>
<keyword id="KW-0378">Hydrolase</keyword>
<keyword id="KW-0645">Protease</keyword>
<keyword id="KW-0720">Serine protease</keyword>
<gene>
    <name evidence="1" type="primary">clpP</name>
    <name type="ordered locus">lin2612</name>
</gene>
<feature type="chain" id="PRO_0000179584" description="ATP-dependent Clp protease proteolytic subunit">
    <location>
        <begin position="1"/>
        <end position="198"/>
    </location>
</feature>
<feature type="active site" description="Nucleophile" evidence="1">
    <location>
        <position position="98"/>
    </location>
</feature>
<feature type="active site" evidence="1">
    <location>
        <position position="123"/>
    </location>
</feature>
<accession>Q928C4</accession>
<name>CLPP_LISIN</name>
<dbReference type="EC" id="3.4.21.92" evidence="1"/>
<dbReference type="EMBL" id="AL596173">
    <property type="protein sequence ID" value="CAC97839.1"/>
    <property type="molecule type" value="Genomic_DNA"/>
</dbReference>
<dbReference type="PIR" id="AG1758">
    <property type="entry name" value="AG1758"/>
</dbReference>
<dbReference type="RefSeq" id="WP_003768278.1">
    <property type="nucleotide sequence ID" value="NC_003212.1"/>
</dbReference>
<dbReference type="SMR" id="Q928C4"/>
<dbReference type="STRING" id="272626.gene:17566993"/>
<dbReference type="MEROPS" id="S14.001"/>
<dbReference type="GeneID" id="93235876"/>
<dbReference type="KEGG" id="lin:clpP"/>
<dbReference type="eggNOG" id="COG0740">
    <property type="taxonomic scope" value="Bacteria"/>
</dbReference>
<dbReference type="HOGENOM" id="CLU_058707_3_2_9"/>
<dbReference type="OrthoDB" id="9802800at2"/>
<dbReference type="Proteomes" id="UP000002513">
    <property type="component" value="Chromosome"/>
</dbReference>
<dbReference type="GO" id="GO:0005737">
    <property type="term" value="C:cytoplasm"/>
    <property type="evidence" value="ECO:0007669"/>
    <property type="project" value="UniProtKB-SubCell"/>
</dbReference>
<dbReference type="GO" id="GO:0009368">
    <property type="term" value="C:endopeptidase Clp complex"/>
    <property type="evidence" value="ECO:0007669"/>
    <property type="project" value="TreeGrafter"/>
</dbReference>
<dbReference type="GO" id="GO:0004176">
    <property type="term" value="F:ATP-dependent peptidase activity"/>
    <property type="evidence" value="ECO:0007669"/>
    <property type="project" value="InterPro"/>
</dbReference>
<dbReference type="GO" id="GO:0051117">
    <property type="term" value="F:ATPase binding"/>
    <property type="evidence" value="ECO:0007669"/>
    <property type="project" value="TreeGrafter"/>
</dbReference>
<dbReference type="GO" id="GO:0004252">
    <property type="term" value="F:serine-type endopeptidase activity"/>
    <property type="evidence" value="ECO:0007669"/>
    <property type="project" value="UniProtKB-UniRule"/>
</dbReference>
<dbReference type="GO" id="GO:0006515">
    <property type="term" value="P:protein quality control for misfolded or incompletely synthesized proteins"/>
    <property type="evidence" value="ECO:0007669"/>
    <property type="project" value="TreeGrafter"/>
</dbReference>
<dbReference type="CDD" id="cd07017">
    <property type="entry name" value="S14_ClpP_2"/>
    <property type="match status" value="1"/>
</dbReference>
<dbReference type="FunFam" id="3.90.226.10:FF:000001">
    <property type="entry name" value="ATP-dependent Clp protease proteolytic subunit"/>
    <property type="match status" value="1"/>
</dbReference>
<dbReference type="Gene3D" id="3.90.226.10">
    <property type="entry name" value="2-enoyl-CoA Hydratase, Chain A, domain 1"/>
    <property type="match status" value="1"/>
</dbReference>
<dbReference type="HAMAP" id="MF_00444">
    <property type="entry name" value="ClpP"/>
    <property type="match status" value="1"/>
</dbReference>
<dbReference type="InterPro" id="IPR001907">
    <property type="entry name" value="ClpP"/>
</dbReference>
<dbReference type="InterPro" id="IPR029045">
    <property type="entry name" value="ClpP/crotonase-like_dom_sf"/>
</dbReference>
<dbReference type="InterPro" id="IPR023562">
    <property type="entry name" value="ClpP/TepA"/>
</dbReference>
<dbReference type="InterPro" id="IPR033135">
    <property type="entry name" value="ClpP_His_AS"/>
</dbReference>
<dbReference type="InterPro" id="IPR018215">
    <property type="entry name" value="ClpP_Ser_AS"/>
</dbReference>
<dbReference type="NCBIfam" id="TIGR00493">
    <property type="entry name" value="clpP"/>
    <property type="match status" value="1"/>
</dbReference>
<dbReference type="NCBIfam" id="NF001368">
    <property type="entry name" value="PRK00277.1"/>
    <property type="match status" value="1"/>
</dbReference>
<dbReference type="NCBIfam" id="NF009205">
    <property type="entry name" value="PRK12553.1"/>
    <property type="match status" value="1"/>
</dbReference>
<dbReference type="PANTHER" id="PTHR10381">
    <property type="entry name" value="ATP-DEPENDENT CLP PROTEASE PROTEOLYTIC SUBUNIT"/>
    <property type="match status" value="1"/>
</dbReference>
<dbReference type="PANTHER" id="PTHR10381:SF70">
    <property type="entry name" value="ATP-DEPENDENT CLP PROTEASE PROTEOLYTIC SUBUNIT"/>
    <property type="match status" value="1"/>
</dbReference>
<dbReference type="Pfam" id="PF00574">
    <property type="entry name" value="CLP_protease"/>
    <property type="match status" value="1"/>
</dbReference>
<dbReference type="PRINTS" id="PR00127">
    <property type="entry name" value="CLPPROTEASEP"/>
</dbReference>
<dbReference type="SUPFAM" id="SSF52096">
    <property type="entry name" value="ClpP/crotonase"/>
    <property type="match status" value="1"/>
</dbReference>
<dbReference type="PROSITE" id="PS00382">
    <property type="entry name" value="CLP_PROTEASE_HIS"/>
    <property type="match status" value="1"/>
</dbReference>
<dbReference type="PROSITE" id="PS00381">
    <property type="entry name" value="CLP_PROTEASE_SER"/>
    <property type="match status" value="1"/>
</dbReference>
<comment type="function">
    <text evidence="1">Cleaves peptides in various proteins in a process that requires ATP hydrolysis. Has a chymotrypsin-like activity. Plays a major role in the degradation of misfolded proteins.</text>
</comment>
<comment type="catalytic activity">
    <reaction evidence="1">
        <text>Hydrolysis of proteins to small peptides in the presence of ATP and magnesium. alpha-casein is the usual test substrate. In the absence of ATP, only oligopeptides shorter than five residues are hydrolyzed (such as succinyl-Leu-Tyr-|-NHMec, and Leu-Tyr-Leu-|-Tyr-Trp, in which cleavage of the -Tyr-|-Leu- and -Tyr-|-Trp bonds also occurs).</text>
        <dbReference type="EC" id="3.4.21.92"/>
    </reaction>
</comment>
<comment type="subunit">
    <text evidence="1">Fourteen ClpP subunits assemble into 2 heptameric rings which stack back to back to give a disk-like structure with a central cavity, resembling the structure of eukaryotic proteasomes.</text>
</comment>
<comment type="subcellular location">
    <subcellularLocation>
        <location evidence="1">Cytoplasm</location>
    </subcellularLocation>
</comment>
<comment type="similarity">
    <text evidence="1">Belongs to the peptidase S14 family.</text>
</comment>
<proteinExistence type="inferred from homology"/>